<feature type="chain" id="PRO_0000380677" description="Probable long-chain-alcohol O-fatty-acyltransferase 1">
    <location>
        <begin position="1"/>
        <end position="341"/>
    </location>
</feature>
<feature type="transmembrane region" description="Helical" evidence="2">
    <location>
        <begin position="7"/>
        <end position="27"/>
    </location>
</feature>
<feature type="transmembrane region" description="Helical" evidence="2">
    <location>
        <begin position="36"/>
        <end position="56"/>
    </location>
</feature>
<feature type="transmembrane region" description="Helical" evidence="2">
    <location>
        <begin position="58"/>
        <end position="78"/>
    </location>
</feature>
<feature type="transmembrane region" description="Helical" evidence="2">
    <location>
        <begin position="120"/>
        <end position="140"/>
    </location>
</feature>
<feature type="transmembrane region" description="Helical" evidence="2">
    <location>
        <begin position="149"/>
        <end position="169"/>
    </location>
</feature>
<feature type="transmembrane region" description="Helical" evidence="2">
    <location>
        <begin position="233"/>
        <end position="253"/>
    </location>
</feature>
<feature type="transmembrane region" description="Helical" evidence="2">
    <location>
        <begin position="261"/>
        <end position="281"/>
    </location>
</feature>
<feature type="transmembrane region" description="Helical" evidence="2">
    <location>
        <begin position="293"/>
        <end position="313"/>
    </location>
</feature>
<protein>
    <recommendedName>
        <fullName>Probable long-chain-alcohol O-fatty-acyltransferase 1</fullName>
        <ecNumber>2.3.1.75</ecNumber>
    </recommendedName>
    <alternativeName>
        <fullName>Wax synthase 1</fullName>
    </alternativeName>
</protein>
<keyword id="KW-0012">Acyltransferase</keyword>
<keyword id="KW-0444">Lipid biosynthesis</keyword>
<keyword id="KW-0443">Lipid metabolism</keyword>
<keyword id="KW-0472">Membrane</keyword>
<keyword id="KW-1185">Reference proteome</keyword>
<keyword id="KW-0808">Transferase</keyword>
<keyword id="KW-0812">Transmembrane</keyword>
<keyword id="KW-1133">Transmembrane helix</keyword>
<comment type="function">
    <text evidence="1">Catalyzes the final step in the synthesis of long-chain linear esters (waxes).</text>
</comment>
<comment type="catalytic activity">
    <reaction>
        <text>a long chain fatty alcohol + a fatty acyl-CoA = a wax ester + CoA</text>
        <dbReference type="Rhea" id="RHEA:38443"/>
        <dbReference type="ChEBI" id="CHEBI:10036"/>
        <dbReference type="ChEBI" id="CHEBI:17135"/>
        <dbReference type="ChEBI" id="CHEBI:57287"/>
        <dbReference type="ChEBI" id="CHEBI:77636"/>
        <dbReference type="EC" id="2.3.1.75"/>
    </reaction>
</comment>
<comment type="subcellular location">
    <subcellularLocation>
        <location evidence="3">Membrane</location>
        <topology evidence="3">Multi-pass membrane protein</topology>
    </subcellularLocation>
</comment>
<comment type="similarity">
    <text evidence="3">Belongs to the wax synthase family.</text>
</comment>
<accession>Q9FJ72</accession>
<name>WAXS1_ARATH</name>
<sequence length="341" mass="38734">MEEKFRNLIEVWISALISLSYCYYISSKLSKGVLRLLSILPVCILFLVLPLFLSCVHFCAISVLFLSWLANFKLLLFAFDEGPLFPLPPKLSRFICFACLPIKIRQDPSPNAIPNLHPKPMPKWVLAVKILVLGVLLHVYEYRDGLPRFVVLALYCLHIYLEVELVLVFVGAVVSTLLGCNIEPVFNEPYLATSLQDFWSRRWNLMVSAVLRSTVHIPVQRFFKRILSPDGAMFAGVMASFFVSGLMHELLYFYMIRKPPTWEVTCFFVLHGAATATEIAVKRTQWLRPPHRAVSGLVVLTFVSVTGVWLFLAQVLRNNVHEKAIGECLLVLDLAKLFTSS</sequence>
<gene>
    <name type="primary">AT1</name>
    <name type="ordered locus">At5g55380</name>
    <name type="ORF">MTE17.9</name>
</gene>
<reference key="1">
    <citation type="journal article" date="1998" name="DNA Res.">
        <title>Structural analysis of Arabidopsis thaliana chromosome 5. VII. Sequence features of the regions of 1,013,767 bp covered by sixteen physically assigned P1 and TAC clones.</title>
        <authorList>
            <person name="Nakamura Y."/>
            <person name="Sato S."/>
            <person name="Asamizu E."/>
            <person name="Kaneko T."/>
            <person name="Kotani H."/>
            <person name="Miyajima N."/>
            <person name="Tabata S."/>
        </authorList>
    </citation>
    <scope>NUCLEOTIDE SEQUENCE [LARGE SCALE GENOMIC DNA]</scope>
    <source>
        <strain>cv. Columbia</strain>
    </source>
</reference>
<reference key="2">
    <citation type="journal article" date="2017" name="Plant J.">
        <title>Araport11: a complete reannotation of the Arabidopsis thaliana reference genome.</title>
        <authorList>
            <person name="Cheng C.Y."/>
            <person name="Krishnakumar V."/>
            <person name="Chan A.P."/>
            <person name="Thibaud-Nissen F."/>
            <person name="Schobel S."/>
            <person name="Town C.D."/>
        </authorList>
    </citation>
    <scope>GENOME REANNOTATION</scope>
    <source>
        <strain>cv. Columbia</strain>
    </source>
</reference>
<reference key="3">
    <citation type="journal article" date="2003" name="Science">
        <title>Empirical analysis of transcriptional activity in the Arabidopsis genome.</title>
        <authorList>
            <person name="Yamada K."/>
            <person name="Lim J."/>
            <person name="Dale J.M."/>
            <person name="Chen H."/>
            <person name="Shinn P."/>
            <person name="Palm C.J."/>
            <person name="Southwick A.M."/>
            <person name="Wu H.C."/>
            <person name="Kim C.J."/>
            <person name="Nguyen M."/>
            <person name="Pham P.K."/>
            <person name="Cheuk R.F."/>
            <person name="Karlin-Newmann G."/>
            <person name="Liu S.X."/>
            <person name="Lam B."/>
            <person name="Sakano H."/>
            <person name="Wu T."/>
            <person name="Yu G."/>
            <person name="Miranda M."/>
            <person name="Quach H.L."/>
            <person name="Tripp M."/>
            <person name="Chang C.H."/>
            <person name="Lee J.M."/>
            <person name="Toriumi M.J."/>
            <person name="Chan M.M."/>
            <person name="Tang C.C."/>
            <person name="Onodera C.S."/>
            <person name="Deng J.M."/>
            <person name="Akiyama K."/>
            <person name="Ansari Y."/>
            <person name="Arakawa T."/>
            <person name="Banh J."/>
            <person name="Banno F."/>
            <person name="Bowser L."/>
            <person name="Brooks S.Y."/>
            <person name="Carninci P."/>
            <person name="Chao Q."/>
            <person name="Choy N."/>
            <person name="Enju A."/>
            <person name="Goldsmith A.D."/>
            <person name="Gurjal M."/>
            <person name="Hansen N.F."/>
            <person name="Hayashizaki Y."/>
            <person name="Johnson-Hopson C."/>
            <person name="Hsuan V.W."/>
            <person name="Iida K."/>
            <person name="Karnes M."/>
            <person name="Khan S."/>
            <person name="Koesema E."/>
            <person name="Ishida J."/>
            <person name="Jiang P.X."/>
            <person name="Jones T."/>
            <person name="Kawai J."/>
            <person name="Kamiya A."/>
            <person name="Meyers C."/>
            <person name="Nakajima M."/>
            <person name="Narusaka M."/>
            <person name="Seki M."/>
            <person name="Sakurai T."/>
            <person name="Satou M."/>
            <person name="Tamse R."/>
            <person name="Vaysberg M."/>
            <person name="Wallender E.K."/>
            <person name="Wong C."/>
            <person name="Yamamura Y."/>
            <person name="Yuan S."/>
            <person name="Shinozaki K."/>
            <person name="Davis R.W."/>
            <person name="Theologis A."/>
            <person name="Ecker J.R."/>
        </authorList>
    </citation>
    <scope>NUCLEOTIDE SEQUENCE [LARGE SCALE MRNA]</scope>
    <source>
        <strain>cv. Columbia</strain>
    </source>
</reference>
<reference key="4">
    <citation type="journal article" date="2000" name="Plant Physiol.">
        <title>Purification of a jojoba embryo wax synthase, cloning of its cDNA, and production of high levels of wax in seeds of transgenic arabidopsis.</title>
        <authorList>
            <person name="Lardizabal K.D."/>
            <person name="Metz J.G."/>
            <person name="Sakamoto T."/>
            <person name="Hutton W.C."/>
            <person name="Pollard M.R."/>
            <person name="Lassner M.W."/>
        </authorList>
    </citation>
    <scope>IDENTIFICATION</scope>
</reference>
<proteinExistence type="evidence at transcript level"/>
<evidence type="ECO:0000250" key="1"/>
<evidence type="ECO:0000255" key="2"/>
<evidence type="ECO:0000305" key="3"/>
<dbReference type="EC" id="2.3.1.75"/>
<dbReference type="EMBL" id="AB015479">
    <property type="protein sequence ID" value="BAB08555.1"/>
    <property type="molecule type" value="Genomic_DNA"/>
</dbReference>
<dbReference type="EMBL" id="CP002688">
    <property type="protein sequence ID" value="AED96622.1"/>
    <property type="molecule type" value="Genomic_DNA"/>
</dbReference>
<dbReference type="EMBL" id="AY090447">
    <property type="protein sequence ID" value="AAL91291.1"/>
    <property type="molecule type" value="mRNA"/>
</dbReference>
<dbReference type="EMBL" id="AY143868">
    <property type="protein sequence ID" value="AAN28807.1"/>
    <property type="molecule type" value="mRNA"/>
</dbReference>
<dbReference type="RefSeq" id="NP_200349.1">
    <property type="nucleotide sequence ID" value="NM_124920.4"/>
</dbReference>
<dbReference type="BioGRID" id="20875">
    <property type="interactions" value="12"/>
</dbReference>
<dbReference type="FunCoup" id="Q9FJ72">
    <property type="interactions" value="1"/>
</dbReference>
<dbReference type="IntAct" id="Q9FJ72">
    <property type="interactions" value="12"/>
</dbReference>
<dbReference type="STRING" id="3702.Q9FJ72"/>
<dbReference type="PaxDb" id="3702-AT5G55380.1"/>
<dbReference type="ProteomicsDB" id="242483"/>
<dbReference type="EnsemblPlants" id="AT5G55380.1">
    <property type="protein sequence ID" value="AT5G55380.1"/>
    <property type="gene ID" value="AT5G55380"/>
</dbReference>
<dbReference type="GeneID" id="835631"/>
<dbReference type="Gramene" id="AT5G55380.1">
    <property type="protein sequence ID" value="AT5G55380.1"/>
    <property type="gene ID" value="AT5G55380"/>
</dbReference>
<dbReference type="KEGG" id="ath:AT5G55380"/>
<dbReference type="Araport" id="AT5G55380"/>
<dbReference type="TAIR" id="AT5G55380"/>
<dbReference type="eggNOG" id="ENOG502QSCR">
    <property type="taxonomic scope" value="Eukaryota"/>
</dbReference>
<dbReference type="HOGENOM" id="CLU_045902_0_0_1"/>
<dbReference type="InParanoid" id="Q9FJ72"/>
<dbReference type="OMA" id="ISICYCY"/>
<dbReference type="PhylomeDB" id="Q9FJ72"/>
<dbReference type="BioCyc" id="ARA:AT5G55380-MONOMER"/>
<dbReference type="BRENDA" id="2.3.1.75">
    <property type="organism ID" value="399"/>
</dbReference>
<dbReference type="PRO" id="PR:Q9FJ72"/>
<dbReference type="Proteomes" id="UP000006548">
    <property type="component" value="Chromosome 5"/>
</dbReference>
<dbReference type="ExpressionAtlas" id="Q9FJ72">
    <property type="expression patterns" value="baseline and differential"/>
</dbReference>
<dbReference type="GO" id="GO:0016020">
    <property type="term" value="C:membrane"/>
    <property type="evidence" value="ECO:0007669"/>
    <property type="project" value="UniProtKB-SubCell"/>
</dbReference>
<dbReference type="GO" id="GO:0047196">
    <property type="term" value="F:long-chain-alcohol O-fatty-acyltransferase activity"/>
    <property type="evidence" value="ECO:0007669"/>
    <property type="project" value="UniProtKB-EC"/>
</dbReference>
<dbReference type="GO" id="GO:0006629">
    <property type="term" value="P:lipid metabolic process"/>
    <property type="evidence" value="ECO:0007669"/>
    <property type="project" value="UniProtKB-KW"/>
</dbReference>
<dbReference type="InterPro" id="IPR044851">
    <property type="entry name" value="Wax_synthase"/>
</dbReference>
<dbReference type="InterPro" id="IPR032805">
    <property type="entry name" value="Wax_synthase_dom"/>
</dbReference>
<dbReference type="InterPro" id="IPR017088">
    <property type="entry name" value="Wax_synthase_Magnoliopsida"/>
</dbReference>
<dbReference type="PANTHER" id="PTHR31595:SF45">
    <property type="entry name" value="LONG-CHAIN-ALCOHOL O-FATTY-ACYLTRANSFERASE 1-RELATED"/>
    <property type="match status" value="1"/>
</dbReference>
<dbReference type="PANTHER" id="PTHR31595">
    <property type="entry name" value="LONG-CHAIN-ALCOHOL O-FATTY-ACYLTRANSFERASE 3-RELATED"/>
    <property type="match status" value="1"/>
</dbReference>
<dbReference type="Pfam" id="PF13813">
    <property type="entry name" value="MBOAT_2"/>
    <property type="match status" value="1"/>
</dbReference>
<dbReference type="PIRSF" id="PIRSF037006">
    <property type="entry name" value="Wax_synthase"/>
    <property type="match status" value="1"/>
</dbReference>
<organism>
    <name type="scientific">Arabidopsis thaliana</name>
    <name type="common">Mouse-ear cress</name>
    <dbReference type="NCBI Taxonomy" id="3702"/>
    <lineage>
        <taxon>Eukaryota</taxon>
        <taxon>Viridiplantae</taxon>
        <taxon>Streptophyta</taxon>
        <taxon>Embryophyta</taxon>
        <taxon>Tracheophyta</taxon>
        <taxon>Spermatophyta</taxon>
        <taxon>Magnoliopsida</taxon>
        <taxon>eudicotyledons</taxon>
        <taxon>Gunneridae</taxon>
        <taxon>Pentapetalae</taxon>
        <taxon>rosids</taxon>
        <taxon>malvids</taxon>
        <taxon>Brassicales</taxon>
        <taxon>Brassicaceae</taxon>
        <taxon>Camelineae</taxon>
        <taxon>Arabidopsis</taxon>
    </lineage>
</organism>